<accession>Q8L5Y6</accession>
<accession>O64720</accession>
<comment type="function">
    <text evidence="1 3 4 5 7 8">Key assembly factor of SCF (SKP1-CUL1-F-box protein) E3 ubiquitin ligase complexes that promotes the exchange of the substrate-recognition F-box subunit in SCF complexes, thereby playing a key role in the cellular repertoire of SCF complexes. Acts as a F-box protein exchange factor (By similarity). Required for SCF(TIR1) function. Modulates SCF(TIR1) function through its interactions with the CUL1 subunit. Represses photomorphogenesis by promoting HY5 degradation in darkness.</text>
</comment>
<comment type="subunit">
    <text evidence="4 6 8">Interacts with CUL1 and CUL4. Binds unneddylated CUL1, but cannot bind CUL1 once it has been neddylated.</text>
</comment>
<comment type="interaction">
    <interactant intactId="EBI-602912">
        <id>Q8L5Y6</id>
    </interactant>
    <interactant intactId="EBI-532411">
        <id>Q94AH6</id>
        <label>CUL1</label>
    </interactant>
    <organismsDiffer>false</organismsDiffer>
    <experiments>7</experiments>
</comment>
<comment type="interaction">
    <interactant intactId="EBI-602912">
        <id>Q8L5Y6</id>
    </interactant>
    <interactant intactId="EBI-541750">
        <id>Q8LGH4</id>
        <label>CUL4</label>
    </interactant>
    <organismsDiffer>false</organismsDiffer>
    <experiments>2</experiments>
</comment>
<comment type="interaction">
    <interactant intactId="EBI-602912">
        <id>Q8L5Y6</id>
    </interactant>
    <interactant intactId="EBI-4426127">
        <id>Q8GXL7</id>
        <label>GATA24</label>
    </interactant>
    <organismsDiffer>false</organismsDiffer>
    <experiments>3</experiments>
</comment>
<comment type="interaction">
    <interactant intactId="EBI-602912">
        <id>Q8L5Y6</id>
    </interactant>
    <interactant intactId="EBI-530486">
        <id>P46639</id>
        <label>KNAT1</label>
    </interactant>
    <organismsDiffer>false</organismsDiffer>
    <experiments>4</experiments>
</comment>
<comment type="interaction">
    <interactant intactId="EBI-602912">
        <id>Q8L5Y6</id>
    </interactant>
    <interactant intactId="EBI-2112777">
        <id>Q9SK33</id>
        <label>WRKY60</label>
    </interactant>
    <organismsDiffer>false</organismsDiffer>
    <experiments>3</experiments>
</comment>
<comment type="alternative products">
    <event type="alternative splicing"/>
    <isoform>
        <id>Q8L5Y6-1</id>
        <name>1</name>
        <sequence type="displayed"/>
    </isoform>
    <isoform>
        <id>Q8L5Y6-2</id>
        <name>2</name>
        <sequence type="described" ref="VSP_039624"/>
    </isoform>
</comment>
<comment type="tissue specificity">
    <text evidence="5">Highly expressed in roots. Expressed in stems, flowers and siliques.</text>
</comment>
<comment type="disruption phenotype">
    <text evidence="3 4 7">Developmental phenotypes such as dwarfism, organ defects, short inflorescences and mishaped leaves. Low fertility and reduced responses to hormones.</text>
</comment>
<comment type="similarity">
    <text evidence="9">Belongs to the CAND family.</text>
</comment>
<name>CAND1_ARATH</name>
<gene>
    <name type="primary">CAND1</name>
    <name type="synonym">ETA2</name>
    <name type="synonym">HVE</name>
    <name type="ordered locus">At2g02560</name>
    <name type="ORF">T8K22.14</name>
</gene>
<sequence>MANLQVSGILEKFQMTGKDKDYRYMATSDLLNELNKDSFKIDLDLEVRLSSIILQQLDDVAGDVSGLAVKCLAPLVKKVGEERIVEMTNKLCDKLLHGKDQHRDTASIALRTVVAQIAPTLAPSILVTLTPQMIGGISGQGMSSGIKCECLEIMCDVVQKYGSLMTDDHEKLLNTLLLQLGCNQATVRKKTVTCIASLASSLSDDLLAKATVEVVKNLSNRNAKSEITRTNIQMIGALCRAVGYRFGTHLGNTVPVLINYCTSASENDEELREYSLQALESFLLRCPRDISPYCDEILNLTLEYISYDPNFTDNMEEDTDNETLEDEEDDESANEYTDDEDASWKVRRAAAKCLAGLIVSRSEMLTKVYQEACPKLIDRFKEREENVKMDVFNTFIDLLRQTGNVTKGQTDTDESSPKWLLKQEVSKIVKSINRQLREKSVKTKVGAFSVLRELVVVLPDCLADHIGSLVPGIERALNDKSSTSNLKIEALVFTKLVLASHAPPVFHPYIKALSSPVLAAVGERYYKVTAEALRVCGELVRVVRPSTAGMGFDFKPFVHPIYNAIMSRLTNQDQDQEVKECAITCMGLVISTFGDQLRAELPSCLPVLVDRMGNEITRLTAVKAFSVIATSPLHINLSCVLDHLIAELTGFLRKANRVLRQATLITMNTLVTAYGDKIGSEAYEVILVELSSLISVSDLHMTALALELCCTLMTGKSCSENISLAVRNKVLPQALTLVKSPLLQGQALLDLQKFFEALVYHANTSFYTLLESLLSCAKPSPQSGGVPKQALYSIAQCVAVLCLAAGDKNCSSTVKMLMEILKDDSGTNSAKQHLALLSLGEIGRRKDLSAHAGIETIVIESFQSPFEEIKSAASYALGNIAVGNLSNYLPFILDQIDNQQKKQYILLHSLKEVIVRQSVDKADFQNSSVEKILALLFNHCESEEEGVRNVVAECLGKMALIEPEKLVPALQVRTTSPAAFTRATVVTAVKYSVVERPEKLDEIIFPQISSFLMLIKDGDRHVRRAAVSALSTFAHYKPNLIKGLLPELLPLLYDQTVIKKELIRTVDLGPFKHVVDDGLELRKAAFECVFTLVDSCLDQVNPSSFIVPFLKSGLEDHYDLKMLCHLILSLLADKCPSAVLAVLDSLVEPLHKTISFKPKQDAVKQEHDRNEDMIRSALRAISSLDRINGVDYSHKFKGLMGDMKRSVPLWEKFQTIRNE</sequence>
<dbReference type="EMBL" id="AC004136">
    <property type="protein sequence ID" value="AAC18930.1"/>
    <property type="molecule type" value="Genomic_DNA"/>
</dbReference>
<dbReference type="EMBL" id="CP002685">
    <property type="protein sequence ID" value="AEC05595.1"/>
    <property type="molecule type" value="Genomic_DNA"/>
</dbReference>
<dbReference type="EMBL" id="CP002685">
    <property type="protein sequence ID" value="AEC05596.1"/>
    <property type="molecule type" value="Genomic_DNA"/>
</dbReference>
<dbReference type="EMBL" id="AY099857">
    <property type="protein sequence ID" value="AAM20708.1"/>
    <property type="molecule type" value="mRNA"/>
</dbReference>
<dbReference type="EMBL" id="BT010134">
    <property type="protein sequence ID" value="AAQ22603.1"/>
    <property type="molecule type" value="mRNA"/>
</dbReference>
<dbReference type="PIR" id="T00607">
    <property type="entry name" value="T00607"/>
</dbReference>
<dbReference type="RefSeq" id="NP_001030954.1">
    <molecule id="Q8L5Y6-2"/>
    <property type="nucleotide sequence ID" value="NM_001035877.2"/>
</dbReference>
<dbReference type="RefSeq" id="NP_178360.2">
    <molecule id="Q8L5Y6-1"/>
    <property type="nucleotide sequence ID" value="NM_126312.3"/>
</dbReference>
<dbReference type="SMR" id="Q8L5Y6"/>
<dbReference type="BioGRID" id="188">
    <property type="interactions" value="14"/>
</dbReference>
<dbReference type="DIP" id="DIP-33719N"/>
<dbReference type="FunCoup" id="Q8L5Y6">
    <property type="interactions" value="4499"/>
</dbReference>
<dbReference type="IntAct" id="Q8L5Y6">
    <property type="interactions" value="14"/>
</dbReference>
<dbReference type="STRING" id="3702.Q8L5Y6"/>
<dbReference type="iPTMnet" id="Q8L5Y6"/>
<dbReference type="SwissPalm" id="Q8L5Y6"/>
<dbReference type="PaxDb" id="3702-AT2G02560.1"/>
<dbReference type="ProteomicsDB" id="222780">
    <molecule id="Q8L5Y6-1"/>
</dbReference>
<dbReference type="EnsemblPlants" id="AT2G02560.1">
    <molecule id="Q8L5Y6-1"/>
    <property type="protein sequence ID" value="AT2G02560.1"/>
    <property type="gene ID" value="AT2G02560"/>
</dbReference>
<dbReference type="EnsemblPlants" id="AT2G02560.2">
    <molecule id="Q8L5Y6-2"/>
    <property type="protein sequence ID" value="AT2G02560.2"/>
    <property type="gene ID" value="AT2G02560"/>
</dbReference>
<dbReference type="GeneID" id="814786"/>
<dbReference type="Gramene" id="AT2G02560.1">
    <molecule id="Q8L5Y6-1"/>
    <property type="protein sequence ID" value="AT2G02560.1"/>
    <property type="gene ID" value="AT2G02560"/>
</dbReference>
<dbReference type="Gramene" id="AT2G02560.2">
    <molecule id="Q8L5Y6-2"/>
    <property type="protein sequence ID" value="AT2G02560.2"/>
    <property type="gene ID" value="AT2G02560"/>
</dbReference>
<dbReference type="KEGG" id="ath:AT2G02560"/>
<dbReference type="Araport" id="AT2G02560"/>
<dbReference type="TAIR" id="AT2G02560">
    <property type="gene designation" value="CAND1"/>
</dbReference>
<dbReference type="eggNOG" id="KOG1824">
    <property type="taxonomic scope" value="Eukaryota"/>
</dbReference>
<dbReference type="InParanoid" id="Q8L5Y6"/>
<dbReference type="OMA" id="AYIPHFQ"/>
<dbReference type="PhylomeDB" id="Q8L5Y6"/>
<dbReference type="PRO" id="PR:Q8L5Y6"/>
<dbReference type="Proteomes" id="UP000006548">
    <property type="component" value="Chromosome 2"/>
</dbReference>
<dbReference type="ExpressionAtlas" id="Q8L5Y6">
    <property type="expression patterns" value="baseline and differential"/>
</dbReference>
<dbReference type="GO" id="GO:0009505">
    <property type="term" value="C:plant-type cell wall"/>
    <property type="evidence" value="ECO:0007005"/>
    <property type="project" value="TAIR"/>
</dbReference>
<dbReference type="GO" id="GO:0005886">
    <property type="term" value="C:plasma membrane"/>
    <property type="evidence" value="ECO:0007005"/>
    <property type="project" value="TAIR"/>
</dbReference>
<dbReference type="GO" id="GO:0009733">
    <property type="term" value="P:response to auxin"/>
    <property type="evidence" value="ECO:0000315"/>
    <property type="project" value="TAIR"/>
</dbReference>
<dbReference type="GO" id="GO:0010265">
    <property type="term" value="P:SCF complex assembly"/>
    <property type="evidence" value="ECO:0007669"/>
    <property type="project" value="InterPro"/>
</dbReference>
<dbReference type="GO" id="GO:0010228">
    <property type="term" value="P:vegetative to reproductive phase transition of meristem"/>
    <property type="evidence" value="ECO:0000315"/>
    <property type="project" value="TAIR"/>
</dbReference>
<dbReference type="GO" id="GO:0010051">
    <property type="term" value="P:xylem and phloem pattern formation"/>
    <property type="evidence" value="ECO:0000315"/>
    <property type="project" value="TAIR"/>
</dbReference>
<dbReference type="FunFam" id="1.25.10.10:FF:000242">
    <property type="entry name" value="Cullin-associated NEDD8-dissociated protein 1"/>
    <property type="match status" value="1"/>
</dbReference>
<dbReference type="Gene3D" id="1.25.10.10">
    <property type="entry name" value="Leucine-rich Repeat Variant"/>
    <property type="match status" value="1"/>
</dbReference>
<dbReference type="InterPro" id="IPR011989">
    <property type="entry name" value="ARM-like"/>
</dbReference>
<dbReference type="InterPro" id="IPR016024">
    <property type="entry name" value="ARM-type_fold"/>
</dbReference>
<dbReference type="InterPro" id="IPR039852">
    <property type="entry name" value="CAND1/CAND2"/>
</dbReference>
<dbReference type="InterPro" id="IPR013932">
    <property type="entry name" value="TATA-bd_TIP120"/>
</dbReference>
<dbReference type="PANTHER" id="PTHR12696">
    <property type="entry name" value="TIP120"/>
    <property type="match status" value="1"/>
</dbReference>
<dbReference type="Pfam" id="PF08623">
    <property type="entry name" value="TIP120"/>
    <property type="match status" value="1"/>
</dbReference>
<dbReference type="SUPFAM" id="SSF48371">
    <property type="entry name" value="ARM repeat"/>
    <property type="match status" value="1"/>
</dbReference>
<keyword id="KW-0007">Acetylation</keyword>
<keyword id="KW-0025">Alternative splicing</keyword>
<keyword id="KW-1185">Reference proteome</keyword>
<keyword id="KW-0677">Repeat</keyword>
<keyword id="KW-0804">Transcription</keyword>
<keyword id="KW-0805">Transcription regulation</keyword>
<keyword id="KW-0833">Ubl conjugation pathway</keyword>
<feature type="initiator methionine" description="Removed" evidence="10">
    <location>
        <position position="1"/>
    </location>
</feature>
<feature type="chain" id="PRO_0000396859" description="Cullin-associated NEDD8-dissociated protein 1">
    <location>
        <begin position="2"/>
        <end position="1219"/>
    </location>
</feature>
<feature type="repeat" description="HEAT 1">
    <location>
        <begin position="44"/>
        <end position="81"/>
    </location>
</feature>
<feature type="repeat" description="HEAT 2">
    <location>
        <begin position="83"/>
        <end position="119"/>
    </location>
</feature>
<feature type="repeat" description="HEAT 3">
    <location>
        <begin position="209"/>
        <end position="244"/>
    </location>
</feature>
<feature type="repeat" description="HEAT 4">
    <location>
        <begin position="248"/>
        <end position="288"/>
    </location>
</feature>
<feature type="repeat" description="HEAT 5">
    <location>
        <begin position="327"/>
        <end position="363"/>
    </location>
</feature>
<feature type="repeat" description="HEAT 6">
    <location>
        <begin position="367"/>
        <end position="404"/>
    </location>
</feature>
<feature type="repeat" description="HEAT 7">
    <location>
        <begin position="423"/>
        <end position="460"/>
    </location>
</feature>
<feature type="repeat" description="HEAT 8">
    <location>
        <begin position="464"/>
        <end position="503"/>
    </location>
</feature>
<feature type="repeat" description="HEAT 9">
    <location>
        <begin position="599"/>
        <end position="636"/>
    </location>
</feature>
<feature type="repeat" description="HEAT 10">
    <location>
        <begin position="639"/>
        <end position="676"/>
    </location>
</feature>
<feature type="repeat" description="HEAT 11">
    <location>
        <begin position="808"/>
        <end position="848"/>
    </location>
</feature>
<feature type="repeat" description="HEAT 12">
    <location>
        <begin position="850"/>
        <end position="883"/>
    </location>
</feature>
<feature type="repeat" description="HEAT 13">
    <location>
        <begin position="927"/>
        <end position="964"/>
    </location>
</feature>
<feature type="repeat" description="HEAT 14">
    <location>
        <begin position="966"/>
        <end position="998"/>
    </location>
</feature>
<feature type="repeat" description="HEAT 15">
    <location>
        <begin position="1002"/>
        <end position="1039"/>
    </location>
</feature>
<feature type="repeat" description="HEAT 16">
    <location>
        <begin position="1043"/>
        <end position="1079"/>
    </location>
</feature>
<feature type="repeat" description="HEAT 17">
    <location>
        <begin position="1101"/>
        <end position="1137"/>
    </location>
</feature>
<feature type="repeat" description="HEAT 18">
    <location>
        <begin position="1141"/>
        <end position="1180"/>
    </location>
</feature>
<feature type="region of interest" description="Disordered" evidence="2">
    <location>
        <begin position="311"/>
        <end position="340"/>
    </location>
</feature>
<feature type="compositionally biased region" description="Acidic residues" evidence="2">
    <location>
        <begin position="314"/>
        <end position="340"/>
    </location>
</feature>
<feature type="modified residue" description="N-acetylalanine" evidence="10">
    <location>
        <position position="2"/>
    </location>
</feature>
<feature type="splice variant" id="VSP_039624" description="In isoform 2." evidence="9">
    <location>
        <begin position="13"/>
        <end position="14"/>
    </location>
</feature>
<feature type="mutagenesis site" description="In eta2-1; reduced response to auxin." evidence="5">
    <original>G</original>
    <variation>D</variation>
    <location>
        <position position="1069"/>
    </location>
</feature>
<organism>
    <name type="scientific">Arabidopsis thaliana</name>
    <name type="common">Mouse-ear cress</name>
    <dbReference type="NCBI Taxonomy" id="3702"/>
    <lineage>
        <taxon>Eukaryota</taxon>
        <taxon>Viridiplantae</taxon>
        <taxon>Streptophyta</taxon>
        <taxon>Embryophyta</taxon>
        <taxon>Tracheophyta</taxon>
        <taxon>Spermatophyta</taxon>
        <taxon>Magnoliopsida</taxon>
        <taxon>eudicotyledons</taxon>
        <taxon>Gunneridae</taxon>
        <taxon>Pentapetalae</taxon>
        <taxon>rosids</taxon>
        <taxon>malvids</taxon>
        <taxon>Brassicales</taxon>
        <taxon>Brassicaceae</taxon>
        <taxon>Camelineae</taxon>
        <taxon>Arabidopsis</taxon>
    </lineage>
</organism>
<proteinExistence type="evidence at protein level"/>
<evidence type="ECO:0000250" key="1"/>
<evidence type="ECO:0000256" key="2">
    <source>
        <dbReference type="SAM" id="MobiDB-lite"/>
    </source>
</evidence>
<evidence type="ECO:0000269" key="3">
    <source>
    </source>
</evidence>
<evidence type="ECO:0000269" key="4">
    <source>
    </source>
</evidence>
<evidence type="ECO:0000269" key="5">
    <source>
    </source>
</evidence>
<evidence type="ECO:0000269" key="6">
    <source>
    </source>
</evidence>
<evidence type="ECO:0000269" key="7">
    <source>
    </source>
</evidence>
<evidence type="ECO:0000269" key="8">
    <source>
    </source>
</evidence>
<evidence type="ECO:0000305" key="9"/>
<evidence type="ECO:0007744" key="10">
    <source>
    </source>
</evidence>
<protein>
    <recommendedName>
        <fullName>Cullin-associated NEDD8-dissociated protein 1</fullName>
    </recommendedName>
    <alternativeName>
        <fullName>Cullin-associated and neddylation-dissociated protein 1</fullName>
        <shortName>AtCAND1</shortName>
    </alternativeName>
    <alternativeName>
        <fullName>Protein ENHANCER OF TIR1-1 AUXIN RESISTANCE 2</fullName>
    </alternativeName>
    <alternativeName>
        <fullName>Protein HEMIVENATA</fullName>
    </alternativeName>
</protein>
<reference key="1">
    <citation type="journal article" date="1999" name="Nature">
        <title>Sequence and analysis of chromosome 2 of the plant Arabidopsis thaliana.</title>
        <authorList>
            <person name="Lin X."/>
            <person name="Kaul S."/>
            <person name="Rounsley S.D."/>
            <person name="Shea T.P."/>
            <person name="Benito M.-I."/>
            <person name="Town C.D."/>
            <person name="Fujii C.Y."/>
            <person name="Mason T.M."/>
            <person name="Bowman C.L."/>
            <person name="Barnstead M.E."/>
            <person name="Feldblyum T.V."/>
            <person name="Buell C.R."/>
            <person name="Ketchum K.A."/>
            <person name="Lee J.J."/>
            <person name="Ronning C.M."/>
            <person name="Koo H.L."/>
            <person name="Moffat K.S."/>
            <person name="Cronin L.A."/>
            <person name="Shen M."/>
            <person name="Pai G."/>
            <person name="Van Aken S."/>
            <person name="Umayam L."/>
            <person name="Tallon L.J."/>
            <person name="Gill J.E."/>
            <person name="Adams M.D."/>
            <person name="Carrera A.J."/>
            <person name="Creasy T.H."/>
            <person name="Goodman H.M."/>
            <person name="Somerville C.R."/>
            <person name="Copenhaver G.P."/>
            <person name="Preuss D."/>
            <person name="Nierman W.C."/>
            <person name="White O."/>
            <person name="Eisen J.A."/>
            <person name="Salzberg S.L."/>
            <person name="Fraser C.M."/>
            <person name="Venter J.C."/>
        </authorList>
    </citation>
    <scope>NUCLEOTIDE SEQUENCE [LARGE SCALE GENOMIC DNA]</scope>
    <source>
        <strain>cv. Columbia</strain>
    </source>
</reference>
<reference key="2">
    <citation type="journal article" date="2017" name="Plant J.">
        <title>Araport11: a complete reannotation of the Arabidopsis thaliana reference genome.</title>
        <authorList>
            <person name="Cheng C.Y."/>
            <person name="Krishnakumar V."/>
            <person name="Chan A.P."/>
            <person name="Thibaud-Nissen F."/>
            <person name="Schobel S."/>
            <person name="Town C.D."/>
        </authorList>
    </citation>
    <scope>GENOME REANNOTATION</scope>
    <source>
        <strain>cv. Columbia</strain>
    </source>
</reference>
<reference key="3">
    <citation type="journal article" date="2003" name="Science">
        <title>Empirical analysis of transcriptional activity in the Arabidopsis genome.</title>
        <authorList>
            <person name="Yamada K."/>
            <person name="Lim J."/>
            <person name="Dale J.M."/>
            <person name="Chen H."/>
            <person name="Shinn P."/>
            <person name="Palm C.J."/>
            <person name="Southwick A.M."/>
            <person name="Wu H.C."/>
            <person name="Kim C.J."/>
            <person name="Nguyen M."/>
            <person name="Pham P.K."/>
            <person name="Cheuk R.F."/>
            <person name="Karlin-Newmann G."/>
            <person name="Liu S.X."/>
            <person name="Lam B."/>
            <person name="Sakano H."/>
            <person name="Wu T."/>
            <person name="Yu G."/>
            <person name="Miranda M."/>
            <person name="Quach H.L."/>
            <person name="Tripp M."/>
            <person name="Chang C.H."/>
            <person name="Lee J.M."/>
            <person name="Toriumi M.J."/>
            <person name="Chan M.M."/>
            <person name="Tang C.C."/>
            <person name="Onodera C.S."/>
            <person name="Deng J.M."/>
            <person name="Akiyama K."/>
            <person name="Ansari Y."/>
            <person name="Arakawa T."/>
            <person name="Banh J."/>
            <person name="Banno F."/>
            <person name="Bowser L."/>
            <person name="Brooks S.Y."/>
            <person name="Carninci P."/>
            <person name="Chao Q."/>
            <person name="Choy N."/>
            <person name="Enju A."/>
            <person name="Goldsmith A.D."/>
            <person name="Gurjal M."/>
            <person name="Hansen N.F."/>
            <person name="Hayashizaki Y."/>
            <person name="Johnson-Hopson C."/>
            <person name="Hsuan V.W."/>
            <person name="Iida K."/>
            <person name="Karnes M."/>
            <person name="Khan S."/>
            <person name="Koesema E."/>
            <person name="Ishida J."/>
            <person name="Jiang P.X."/>
            <person name="Jones T."/>
            <person name="Kawai J."/>
            <person name="Kamiya A."/>
            <person name="Meyers C."/>
            <person name="Nakajima M."/>
            <person name="Narusaka M."/>
            <person name="Seki M."/>
            <person name="Sakurai T."/>
            <person name="Satou M."/>
            <person name="Tamse R."/>
            <person name="Vaysberg M."/>
            <person name="Wallender E.K."/>
            <person name="Wong C."/>
            <person name="Yamamura Y."/>
            <person name="Yuan S."/>
            <person name="Shinozaki K."/>
            <person name="Davis R.W."/>
            <person name="Theologis A."/>
            <person name="Ecker J.R."/>
        </authorList>
    </citation>
    <scope>NUCLEOTIDE SEQUENCE [LARGE SCALE MRNA] (ISOFORM 1)</scope>
    <source>
        <strain>cv. Columbia</strain>
    </source>
</reference>
<reference key="4">
    <citation type="journal article" date="2004" name="Plant Cell">
        <title>Arabidopsis CAND1, an unmodified CUL1-interacting protein, is involved in multiple developmental pathways controlled by ubiquitin/proteasome-mediated protein Degradation.</title>
        <authorList>
            <person name="Feng S."/>
            <person name="Shen Y."/>
            <person name="Sullivan J.A."/>
            <person name="Rubio V."/>
            <person name="Xiong Y."/>
            <person name="Sun T.P."/>
            <person name="Deng X.W."/>
        </authorList>
    </citation>
    <scope>FUNCTION</scope>
    <scope>INTERACTION WITH CUL1</scope>
    <scope>DISRUPTION PHENOTYPE</scope>
</reference>
<reference key="5">
    <citation type="journal article" date="2004" name="Plant Cell">
        <title>Arabidopsis ETA2, an apparent ortholog of the human cullin-interacting protein CAND1, is required for auxin responses mediated by the SCF(TIR1) ubiquitin ligase.</title>
        <authorList>
            <person name="Chuang H.W."/>
            <person name="Zhang W."/>
            <person name="Gray W.M."/>
        </authorList>
    </citation>
    <scope>FUNCTION</scope>
    <scope>TISSUE SPECIFICITY</scope>
    <scope>MUTAGENESIS OF GLY-1069</scope>
</reference>
<reference key="6">
    <citation type="journal article" date="2004" name="Plant Physiol.">
        <title>AtCAND1, a HEAT-repeat protein that participates in auxin signaling in Arabidopsis.</title>
        <authorList>
            <person name="Cheng Y."/>
            <person name="Dai X."/>
            <person name="Zhao Y."/>
        </authorList>
    </citation>
    <scope>FUNCTION</scope>
    <scope>DISRUPTION PHENOTYPE</scope>
</reference>
<reference key="7">
    <citation type="journal article" date="2006" name="Development">
        <title>The HVE/CAND1 gene is required for the early patterning of leaf venation in Arabidopsis.</title>
        <authorList>
            <person name="Alonso-Peral M.M."/>
            <person name="Candela H."/>
            <person name="del Pozo J.C."/>
            <person name="Martinez-Laborda A."/>
            <person name="Ponce M.R."/>
            <person name="Micol J.L."/>
        </authorList>
    </citation>
    <scope>FUNCTION</scope>
    <scope>DISRUPTION PHENOTYPE</scope>
</reference>
<reference key="8">
    <citation type="journal article" date="2006" name="Plant Cell">
        <title>Arabidopsis CULLIN4 forms an E3 ubiquitin ligase with RBX1 and the CDD complex in mediating light control of development.</title>
        <authorList>
            <person name="Chen H."/>
            <person name="Shen Y."/>
            <person name="Tang X."/>
            <person name="Yu L."/>
            <person name="Wang J."/>
            <person name="Guo L."/>
            <person name="Zhang Y."/>
            <person name="Zhang H."/>
            <person name="Feng S."/>
            <person name="Strickland E."/>
            <person name="Zheng N."/>
            <person name="Deng X.-W."/>
        </authorList>
    </citation>
    <scope>INTERACTION WITH CUL4</scope>
</reference>
<reference key="9">
    <citation type="journal article" date="2008" name="Proc. Natl. Acad. Sci. U.S.A.">
        <title>Genetic analysis of CAND1-CUL1 interactions in Arabidopsis supports a role for CAND1-mediated cycling of the SCFTIR1 complex.</title>
        <authorList>
            <person name="Zhang W."/>
            <person name="Ito H."/>
            <person name="Quint M."/>
            <person name="Huang H."/>
            <person name="Noel L.D."/>
            <person name="Gray W.M."/>
        </authorList>
    </citation>
    <scope>FUNCTION</scope>
    <scope>INTERACTION WITH CUL1</scope>
</reference>
<reference key="10">
    <citation type="journal article" date="2012" name="Mol. Cell. Proteomics">
        <title>Comparative large-scale characterisation of plant vs. mammal proteins reveals similar and idiosyncratic N-alpha acetylation features.</title>
        <authorList>
            <person name="Bienvenut W.V."/>
            <person name="Sumpton D."/>
            <person name="Martinez A."/>
            <person name="Lilla S."/>
            <person name="Espagne C."/>
            <person name="Meinnel T."/>
            <person name="Giglione C."/>
        </authorList>
    </citation>
    <scope>ACETYLATION [LARGE SCALE ANALYSIS] AT ALA-2</scope>
    <scope>CLEAVAGE OF INITIATOR METHIONINE [LARGE SCALE ANALYSIS]</scope>
    <scope>IDENTIFICATION BY MASS SPECTROMETRY [LARGE SCALE ANALYSIS]</scope>
</reference>